<proteinExistence type="inferred from homology"/>
<protein>
    <recommendedName>
        <fullName evidence="1">Phosphopantetheine adenylyltransferase</fullName>
        <ecNumber evidence="1">2.7.7.3</ecNumber>
    </recommendedName>
    <alternativeName>
        <fullName evidence="1">Dephospho-CoA pyrophosphorylase</fullName>
    </alternativeName>
    <alternativeName>
        <fullName evidence="1">Pantetheine-phosphate adenylyltransferase</fullName>
        <shortName evidence="1">PPAT</shortName>
    </alternativeName>
</protein>
<sequence length="140" mass="16319">MKIAIYPGSFNPFHKGHLNILKKAILLFDKVYVVVSKNVNKSLDPDLQSRVENIKNLIKDFSNVEIIINENKLTTTIAKELNACFIIRGLRSQADFEYEIKYYDGFKSLDPNIEVVYFISDYDKRSLSSTILREIEFYKK</sequence>
<dbReference type="EC" id="2.7.7.3" evidence="1"/>
<dbReference type="EMBL" id="U15110">
    <property type="protein sequence ID" value="AAA70405.1"/>
    <property type="molecule type" value="Genomic_DNA"/>
</dbReference>
<dbReference type="EMBL" id="CP000123">
    <property type="protein sequence ID" value="ABC01753.1"/>
    <property type="molecule type" value="Genomic_DNA"/>
</dbReference>
<dbReference type="RefSeq" id="WP_011387120.1">
    <property type="nucleotide sequence ID" value="NC_007633.1"/>
</dbReference>
<dbReference type="SMR" id="P45616"/>
<dbReference type="GeneID" id="23778815"/>
<dbReference type="KEGG" id="mcp:MCAP_0232"/>
<dbReference type="HOGENOM" id="CLU_100149_2_0_14"/>
<dbReference type="PhylomeDB" id="P45616"/>
<dbReference type="UniPathway" id="UPA00241">
    <property type="reaction ID" value="UER00355"/>
</dbReference>
<dbReference type="Proteomes" id="UP000001928">
    <property type="component" value="Chromosome"/>
</dbReference>
<dbReference type="GO" id="GO:0005737">
    <property type="term" value="C:cytoplasm"/>
    <property type="evidence" value="ECO:0007669"/>
    <property type="project" value="UniProtKB-SubCell"/>
</dbReference>
<dbReference type="GO" id="GO:0005524">
    <property type="term" value="F:ATP binding"/>
    <property type="evidence" value="ECO:0007669"/>
    <property type="project" value="UniProtKB-KW"/>
</dbReference>
<dbReference type="GO" id="GO:0004595">
    <property type="term" value="F:pantetheine-phosphate adenylyltransferase activity"/>
    <property type="evidence" value="ECO:0007669"/>
    <property type="project" value="UniProtKB-UniRule"/>
</dbReference>
<dbReference type="GO" id="GO:0015937">
    <property type="term" value="P:coenzyme A biosynthetic process"/>
    <property type="evidence" value="ECO:0007669"/>
    <property type="project" value="UniProtKB-UniRule"/>
</dbReference>
<dbReference type="Gene3D" id="3.40.50.620">
    <property type="entry name" value="HUPs"/>
    <property type="match status" value="1"/>
</dbReference>
<dbReference type="HAMAP" id="MF_00151">
    <property type="entry name" value="PPAT_bact"/>
    <property type="match status" value="1"/>
</dbReference>
<dbReference type="InterPro" id="IPR004821">
    <property type="entry name" value="Cyt_trans-like"/>
</dbReference>
<dbReference type="InterPro" id="IPR001980">
    <property type="entry name" value="PPAT"/>
</dbReference>
<dbReference type="InterPro" id="IPR014729">
    <property type="entry name" value="Rossmann-like_a/b/a_fold"/>
</dbReference>
<dbReference type="NCBIfam" id="TIGR01510">
    <property type="entry name" value="coaD_prev_kdtB"/>
    <property type="match status" value="1"/>
</dbReference>
<dbReference type="NCBIfam" id="TIGR00125">
    <property type="entry name" value="cyt_tran_rel"/>
    <property type="match status" value="1"/>
</dbReference>
<dbReference type="PANTHER" id="PTHR21342">
    <property type="entry name" value="PHOSPHOPANTETHEINE ADENYLYLTRANSFERASE"/>
    <property type="match status" value="1"/>
</dbReference>
<dbReference type="PANTHER" id="PTHR21342:SF1">
    <property type="entry name" value="PHOSPHOPANTETHEINE ADENYLYLTRANSFERASE"/>
    <property type="match status" value="1"/>
</dbReference>
<dbReference type="Pfam" id="PF01467">
    <property type="entry name" value="CTP_transf_like"/>
    <property type="match status" value="1"/>
</dbReference>
<dbReference type="PRINTS" id="PR01020">
    <property type="entry name" value="LPSBIOSNTHSS"/>
</dbReference>
<dbReference type="SUPFAM" id="SSF52374">
    <property type="entry name" value="Nucleotidylyl transferase"/>
    <property type="match status" value="1"/>
</dbReference>
<reference key="1">
    <citation type="journal article" date="1994" name="Protein Sci.">
        <title>Unique dicistronic operon (ptsI-crr) in Mycoplasma capricolum encoding enzyme I and the glucose-specific enzyme IIA of the phosphoenolpyruvate:sugar phosphotransferase system: cloning, sequencing, promoter analysis, and protein characterization.</title>
        <authorList>
            <person name="Zhu P.-P."/>
            <person name="Reizer J."/>
            <person name="Peterkofsky A."/>
        </authorList>
    </citation>
    <scope>NUCLEOTIDE SEQUENCE [GENOMIC DNA]</scope>
</reference>
<reference key="2">
    <citation type="submission" date="2005-09" db="EMBL/GenBank/DDBJ databases">
        <authorList>
            <person name="Glass J.I."/>
            <person name="Lartigue C."/>
            <person name="Pfannkoch C."/>
            <person name="Baden-Tillson H."/>
            <person name="Smith H.O."/>
            <person name="Venter J.C."/>
            <person name="Roske K."/>
            <person name="Wise K.S."/>
            <person name="Calcutt M.J."/>
            <person name="Nelson W.C."/>
            <person name="Nierman W.C."/>
        </authorList>
    </citation>
    <scope>NUCLEOTIDE SEQUENCE [LARGE SCALE GENOMIC DNA]</scope>
    <source>
        <strain>California kid / ATCC 27343 / NCTC 10154</strain>
    </source>
</reference>
<comment type="function">
    <text evidence="1">Reversibly transfers an adenylyl group from ATP to 4'-phosphopantetheine, yielding dephospho-CoA (dPCoA) and pyrophosphate.</text>
</comment>
<comment type="catalytic activity">
    <reaction evidence="1">
        <text>(R)-4'-phosphopantetheine + ATP + H(+) = 3'-dephospho-CoA + diphosphate</text>
        <dbReference type="Rhea" id="RHEA:19801"/>
        <dbReference type="ChEBI" id="CHEBI:15378"/>
        <dbReference type="ChEBI" id="CHEBI:30616"/>
        <dbReference type="ChEBI" id="CHEBI:33019"/>
        <dbReference type="ChEBI" id="CHEBI:57328"/>
        <dbReference type="ChEBI" id="CHEBI:61723"/>
        <dbReference type="EC" id="2.7.7.3"/>
    </reaction>
</comment>
<comment type="cofactor">
    <cofactor evidence="1">
        <name>Mg(2+)</name>
        <dbReference type="ChEBI" id="CHEBI:18420"/>
    </cofactor>
</comment>
<comment type="pathway">
    <text evidence="1">Cofactor biosynthesis; coenzyme A biosynthesis; CoA from (R)-pantothenate: step 4/5.</text>
</comment>
<comment type="subunit">
    <text evidence="1">Homohexamer.</text>
</comment>
<comment type="subcellular location">
    <subcellularLocation>
        <location evidence="1">Cytoplasm</location>
    </subcellularLocation>
</comment>
<comment type="similarity">
    <text evidence="1">Belongs to the bacterial CoaD family.</text>
</comment>
<accession>P45616</accession>
<accession>Q2SSP4</accession>
<evidence type="ECO:0000255" key="1">
    <source>
        <dbReference type="HAMAP-Rule" id="MF_00151"/>
    </source>
</evidence>
<organism>
    <name type="scientific">Mycoplasma capricolum subsp. capricolum (strain California kid / ATCC 27343 / NCTC 10154)</name>
    <dbReference type="NCBI Taxonomy" id="340047"/>
    <lineage>
        <taxon>Bacteria</taxon>
        <taxon>Bacillati</taxon>
        <taxon>Mycoplasmatota</taxon>
        <taxon>Mollicutes</taxon>
        <taxon>Mycoplasmataceae</taxon>
        <taxon>Mycoplasma</taxon>
    </lineage>
</organism>
<gene>
    <name evidence="1" type="primary">coaD</name>
    <name type="synonym">kdtB</name>
    <name type="ordered locus">MCAP_0232</name>
</gene>
<keyword id="KW-0067">ATP-binding</keyword>
<keyword id="KW-0173">Coenzyme A biosynthesis</keyword>
<keyword id="KW-0963">Cytoplasm</keyword>
<keyword id="KW-0460">Magnesium</keyword>
<keyword id="KW-0547">Nucleotide-binding</keyword>
<keyword id="KW-0548">Nucleotidyltransferase</keyword>
<keyword id="KW-0808">Transferase</keyword>
<feature type="chain" id="PRO_0000156236" description="Phosphopantetheine adenylyltransferase">
    <location>
        <begin position="1"/>
        <end position="140"/>
    </location>
</feature>
<feature type="binding site" evidence="1">
    <location>
        <begin position="9"/>
        <end position="10"/>
    </location>
    <ligand>
        <name>ATP</name>
        <dbReference type="ChEBI" id="CHEBI:30616"/>
    </ligand>
</feature>
<feature type="binding site" evidence="1">
    <location>
        <position position="9"/>
    </location>
    <ligand>
        <name>substrate</name>
    </ligand>
</feature>
<feature type="binding site" evidence="1">
    <location>
        <position position="17"/>
    </location>
    <ligand>
        <name>ATP</name>
        <dbReference type="ChEBI" id="CHEBI:30616"/>
    </ligand>
</feature>
<feature type="binding site" evidence="1">
    <location>
        <position position="41"/>
    </location>
    <ligand>
        <name>substrate</name>
    </ligand>
</feature>
<feature type="binding site" evidence="1">
    <location>
        <position position="74"/>
    </location>
    <ligand>
        <name>substrate</name>
    </ligand>
</feature>
<feature type="binding site" evidence="1">
    <location>
        <position position="88"/>
    </location>
    <ligand>
        <name>substrate</name>
    </ligand>
</feature>
<feature type="binding site" evidence="1">
    <location>
        <begin position="89"/>
        <end position="91"/>
    </location>
    <ligand>
        <name>ATP</name>
        <dbReference type="ChEBI" id="CHEBI:30616"/>
    </ligand>
</feature>
<feature type="binding site" evidence="1">
    <location>
        <position position="99"/>
    </location>
    <ligand>
        <name>ATP</name>
        <dbReference type="ChEBI" id="CHEBI:30616"/>
    </ligand>
</feature>
<feature type="binding site" evidence="1">
    <location>
        <begin position="124"/>
        <end position="130"/>
    </location>
    <ligand>
        <name>ATP</name>
        <dbReference type="ChEBI" id="CHEBI:30616"/>
    </ligand>
</feature>
<feature type="site" description="Transition state stabilizer" evidence="1">
    <location>
        <position position="17"/>
    </location>
</feature>
<name>COAD_MYCCT</name>